<organism>
    <name type="scientific">Klebsiella pneumoniae subsp. pneumoniae (strain ATCC 700721 / MGH 78578)</name>
    <dbReference type="NCBI Taxonomy" id="272620"/>
    <lineage>
        <taxon>Bacteria</taxon>
        <taxon>Pseudomonadati</taxon>
        <taxon>Pseudomonadota</taxon>
        <taxon>Gammaproteobacteria</taxon>
        <taxon>Enterobacterales</taxon>
        <taxon>Enterobacteriaceae</taxon>
        <taxon>Klebsiella/Raoultella group</taxon>
        <taxon>Klebsiella</taxon>
        <taxon>Klebsiella pneumoniae complex</taxon>
    </lineage>
</organism>
<comment type="function">
    <text evidence="1">Binds to the 23S rRNA.</text>
</comment>
<comment type="subunit">
    <text evidence="1">Part of the 50S ribosomal subunit.</text>
</comment>
<comment type="similarity">
    <text evidence="1">Belongs to the universal ribosomal protein uL15 family.</text>
</comment>
<evidence type="ECO:0000255" key="1">
    <source>
        <dbReference type="HAMAP-Rule" id="MF_01341"/>
    </source>
</evidence>
<evidence type="ECO:0000256" key="2">
    <source>
        <dbReference type="SAM" id="MobiDB-lite"/>
    </source>
</evidence>
<evidence type="ECO:0000305" key="3"/>
<sequence length="144" mass="15135">MRLNTLSPAEGSKKAGKRLGRGIGSGLGKTGGRGHKGQKSRSGGGVRRGFEGGQMPLYRRLPKFGFTSRKAMITAEIRLSDLAHVEGDVVDLNALKAANIIGVQIEFAKVILSGEVTRPVTVRGLRVTKGARAAIEAAGGKIEE</sequence>
<gene>
    <name evidence="1" type="primary">rplO</name>
    <name type="ordered locus">KPN78578_36630</name>
    <name type="ORF">KPN_03700</name>
</gene>
<keyword id="KW-0687">Ribonucleoprotein</keyword>
<keyword id="KW-0689">Ribosomal protein</keyword>
<keyword id="KW-0694">RNA-binding</keyword>
<keyword id="KW-0699">rRNA-binding</keyword>
<name>RL15_KLEP7</name>
<dbReference type="EMBL" id="CP000647">
    <property type="protein sequence ID" value="ABR79087.1"/>
    <property type="molecule type" value="Genomic_DNA"/>
</dbReference>
<dbReference type="RefSeq" id="WP_002919516.1">
    <property type="nucleotide sequence ID" value="NC_009648.1"/>
</dbReference>
<dbReference type="SMR" id="A6TEV3"/>
<dbReference type="STRING" id="272620.KPN_03700"/>
<dbReference type="jPOST" id="A6TEV3"/>
<dbReference type="PaxDb" id="272620-KPN_03700"/>
<dbReference type="EnsemblBacteria" id="ABR79087">
    <property type="protein sequence ID" value="ABR79087"/>
    <property type="gene ID" value="KPN_03700"/>
</dbReference>
<dbReference type="GeneID" id="93270989"/>
<dbReference type="KEGG" id="kpn:KPN_03700"/>
<dbReference type="HOGENOM" id="CLU_055188_4_2_6"/>
<dbReference type="Proteomes" id="UP000000265">
    <property type="component" value="Chromosome"/>
</dbReference>
<dbReference type="GO" id="GO:0022625">
    <property type="term" value="C:cytosolic large ribosomal subunit"/>
    <property type="evidence" value="ECO:0007669"/>
    <property type="project" value="TreeGrafter"/>
</dbReference>
<dbReference type="GO" id="GO:0019843">
    <property type="term" value="F:rRNA binding"/>
    <property type="evidence" value="ECO:0007669"/>
    <property type="project" value="UniProtKB-UniRule"/>
</dbReference>
<dbReference type="GO" id="GO:0003735">
    <property type="term" value="F:structural constituent of ribosome"/>
    <property type="evidence" value="ECO:0007669"/>
    <property type="project" value="InterPro"/>
</dbReference>
<dbReference type="GO" id="GO:0006412">
    <property type="term" value="P:translation"/>
    <property type="evidence" value="ECO:0007669"/>
    <property type="project" value="UniProtKB-UniRule"/>
</dbReference>
<dbReference type="FunFam" id="3.100.10.10:FF:000003">
    <property type="entry name" value="50S ribosomal protein L15"/>
    <property type="match status" value="1"/>
</dbReference>
<dbReference type="Gene3D" id="3.100.10.10">
    <property type="match status" value="1"/>
</dbReference>
<dbReference type="HAMAP" id="MF_01341">
    <property type="entry name" value="Ribosomal_uL15"/>
    <property type="match status" value="1"/>
</dbReference>
<dbReference type="InterPro" id="IPR030878">
    <property type="entry name" value="Ribosomal_uL15"/>
</dbReference>
<dbReference type="InterPro" id="IPR021131">
    <property type="entry name" value="Ribosomal_uL15/eL18"/>
</dbReference>
<dbReference type="InterPro" id="IPR036227">
    <property type="entry name" value="Ribosomal_uL15/eL18_sf"/>
</dbReference>
<dbReference type="InterPro" id="IPR005749">
    <property type="entry name" value="Ribosomal_uL15_bac-type"/>
</dbReference>
<dbReference type="InterPro" id="IPR001196">
    <property type="entry name" value="Ribosomal_uL15_CS"/>
</dbReference>
<dbReference type="NCBIfam" id="TIGR01071">
    <property type="entry name" value="rplO_bact"/>
    <property type="match status" value="1"/>
</dbReference>
<dbReference type="PANTHER" id="PTHR12934">
    <property type="entry name" value="50S RIBOSOMAL PROTEIN L15"/>
    <property type="match status" value="1"/>
</dbReference>
<dbReference type="PANTHER" id="PTHR12934:SF11">
    <property type="entry name" value="LARGE RIBOSOMAL SUBUNIT PROTEIN UL15M"/>
    <property type="match status" value="1"/>
</dbReference>
<dbReference type="Pfam" id="PF00828">
    <property type="entry name" value="Ribosomal_L27A"/>
    <property type="match status" value="1"/>
</dbReference>
<dbReference type="SUPFAM" id="SSF52080">
    <property type="entry name" value="Ribosomal proteins L15p and L18e"/>
    <property type="match status" value="1"/>
</dbReference>
<dbReference type="PROSITE" id="PS00475">
    <property type="entry name" value="RIBOSOMAL_L15"/>
    <property type="match status" value="1"/>
</dbReference>
<proteinExistence type="inferred from homology"/>
<protein>
    <recommendedName>
        <fullName evidence="1">Large ribosomal subunit protein uL15</fullName>
    </recommendedName>
    <alternativeName>
        <fullName evidence="3">50S ribosomal protein L15</fullName>
    </alternativeName>
</protein>
<accession>A6TEV3</accession>
<reference key="1">
    <citation type="submission" date="2006-09" db="EMBL/GenBank/DDBJ databases">
        <authorList>
            <consortium name="The Klebsiella pneumonia Genome Sequencing Project"/>
            <person name="McClelland M."/>
            <person name="Sanderson E.K."/>
            <person name="Spieth J."/>
            <person name="Clifton W.S."/>
            <person name="Latreille P."/>
            <person name="Sabo A."/>
            <person name="Pepin K."/>
            <person name="Bhonagiri V."/>
            <person name="Porwollik S."/>
            <person name="Ali J."/>
            <person name="Wilson R.K."/>
        </authorList>
    </citation>
    <scope>NUCLEOTIDE SEQUENCE [LARGE SCALE GENOMIC DNA]</scope>
    <source>
        <strain>ATCC 700721 / MGH 78578</strain>
    </source>
</reference>
<feature type="chain" id="PRO_1000054477" description="Large ribosomal subunit protein uL15">
    <location>
        <begin position="1"/>
        <end position="144"/>
    </location>
</feature>
<feature type="region of interest" description="Disordered" evidence="2">
    <location>
        <begin position="1"/>
        <end position="54"/>
    </location>
</feature>
<feature type="compositionally biased region" description="Gly residues" evidence="2">
    <location>
        <begin position="21"/>
        <end position="31"/>
    </location>
</feature>